<accession>Q18GX9</accession>
<dbReference type="EC" id="2.5.1.3" evidence="1"/>
<dbReference type="EMBL" id="AM180088">
    <property type="protein sequence ID" value="CAJ52766.1"/>
    <property type="molecule type" value="Genomic_DNA"/>
</dbReference>
<dbReference type="RefSeq" id="WP_011571882.1">
    <property type="nucleotide sequence ID" value="NC_008212.1"/>
</dbReference>
<dbReference type="SMR" id="Q18GX9"/>
<dbReference type="STRING" id="362976.HQ_2655A"/>
<dbReference type="GeneID" id="4194763"/>
<dbReference type="KEGG" id="hwa:HQ_2655A"/>
<dbReference type="eggNOG" id="arCOG01089">
    <property type="taxonomic scope" value="Archaea"/>
</dbReference>
<dbReference type="HOGENOM" id="CLU_018272_3_2_2"/>
<dbReference type="UniPathway" id="UPA00060">
    <property type="reaction ID" value="UER00141"/>
</dbReference>
<dbReference type="Proteomes" id="UP000001975">
    <property type="component" value="Chromosome"/>
</dbReference>
<dbReference type="GO" id="GO:0005737">
    <property type="term" value="C:cytoplasm"/>
    <property type="evidence" value="ECO:0007669"/>
    <property type="project" value="TreeGrafter"/>
</dbReference>
<dbReference type="GO" id="GO:0000287">
    <property type="term" value="F:magnesium ion binding"/>
    <property type="evidence" value="ECO:0007669"/>
    <property type="project" value="UniProtKB-UniRule"/>
</dbReference>
<dbReference type="GO" id="GO:0004789">
    <property type="term" value="F:thiamine-phosphate diphosphorylase activity"/>
    <property type="evidence" value="ECO:0007669"/>
    <property type="project" value="UniProtKB-UniRule"/>
</dbReference>
<dbReference type="GO" id="GO:0009228">
    <property type="term" value="P:thiamine biosynthetic process"/>
    <property type="evidence" value="ECO:0007669"/>
    <property type="project" value="UniProtKB-KW"/>
</dbReference>
<dbReference type="GO" id="GO:0009229">
    <property type="term" value="P:thiamine diphosphate biosynthetic process"/>
    <property type="evidence" value="ECO:0007669"/>
    <property type="project" value="UniProtKB-UniRule"/>
</dbReference>
<dbReference type="CDD" id="cd00564">
    <property type="entry name" value="TMP_TenI"/>
    <property type="match status" value="1"/>
</dbReference>
<dbReference type="FunFam" id="3.20.20.70:FF:000096">
    <property type="entry name" value="Thiamine-phosphate synthase"/>
    <property type="match status" value="1"/>
</dbReference>
<dbReference type="Gene3D" id="3.20.20.70">
    <property type="entry name" value="Aldolase class I"/>
    <property type="match status" value="1"/>
</dbReference>
<dbReference type="HAMAP" id="MF_00097">
    <property type="entry name" value="TMP_synthase"/>
    <property type="match status" value="1"/>
</dbReference>
<dbReference type="InterPro" id="IPR013785">
    <property type="entry name" value="Aldolase_TIM"/>
</dbReference>
<dbReference type="InterPro" id="IPR036206">
    <property type="entry name" value="ThiamineP_synth_sf"/>
</dbReference>
<dbReference type="InterPro" id="IPR022998">
    <property type="entry name" value="ThiamineP_synth_TenI"/>
</dbReference>
<dbReference type="InterPro" id="IPR034291">
    <property type="entry name" value="TMP_synthase"/>
</dbReference>
<dbReference type="NCBIfam" id="TIGR00693">
    <property type="entry name" value="thiE"/>
    <property type="match status" value="1"/>
</dbReference>
<dbReference type="PANTHER" id="PTHR20857">
    <property type="entry name" value="THIAMINE-PHOSPHATE PYROPHOSPHORYLASE"/>
    <property type="match status" value="1"/>
</dbReference>
<dbReference type="PANTHER" id="PTHR20857:SF15">
    <property type="entry name" value="THIAMINE-PHOSPHATE SYNTHASE"/>
    <property type="match status" value="1"/>
</dbReference>
<dbReference type="Pfam" id="PF02581">
    <property type="entry name" value="TMP-TENI"/>
    <property type="match status" value="1"/>
</dbReference>
<dbReference type="SUPFAM" id="SSF51391">
    <property type="entry name" value="Thiamin phosphate synthase"/>
    <property type="match status" value="1"/>
</dbReference>
<reference key="1">
    <citation type="journal article" date="2006" name="BMC Genomics">
        <title>The genome of the square archaeon Haloquadratum walsbyi: life at the limits of water activity.</title>
        <authorList>
            <person name="Bolhuis H."/>
            <person name="Palm P."/>
            <person name="Wende A."/>
            <person name="Falb M."/>
            <person name="Rampp M."/>
            <person name="Rodriguez-Valera F."/>
            <person name="Pfeiffer F."/>
            <person name="Oesterhelt D."/>
        </authorList>
    </citation>
    <scope>NUCLEOTIDE SEQUENCE [LARGE SCALE GENOMIC DNA]</scope>
    <source>
        <strain>DSM 16790 / HBSQ001</strain>
    </source>
</reference>
<protein>
    <recommendedName>
        <fullName evidence="1">Thiamine-phosphate synthase</fullName>
        <shortName evidence="1">TP synthase</shortName>
        <shortName evidence="1">TPS</shortName>
        <ecNumber evidence="1">2.5.1.3</ecNumber>
    </recommendedName>
    <alternativeName>
        <fullName evidence="1">Thiamine-phosphate pyrophosphorylase</fullName>
        <shortName evidence="1">TMP pyrophosphorylase</shortName>
        <shortName evidence="1">TMP-PPase</shortName>
    </alternativeName>
</protein>
<name>THIE_HALWD</name>
<keyword id="KW-0460">Magnesium</keyword>
<keyword id="KW-0479">Metal-binding</keyword>
<keyword id="KW-1185">Reference proteome</keyword>
<keyword id="KW-0784">Thiamine biosynthesis</keyword>
<keyword id="KW-0808">Transferase</keyword>
<gene>
    <name evidence="1" type="primary">thiE</name>
    <name type="ordered locus">HQ_2655A</name>
</gene>
<comment type="function">
    <text evidence="1">Condenses 4-methyl-5-(beta-hydroxyethyl)thiazole monophosphate (THZ-P) and 2-methyl-4-amino-5-hydroxymethyl pyrimidine pyrophosphate (HMP-PP) to form thiamine monophosphate (TMP).</text>
</comment>
<comment type="catalytic activity">
    <reaction evidence="1">
        <text>2-[(2R,5Z)-2-carboxy-4-methylthiazol-5(2H)-ylidene]ethyl phosphate + 4-amino-2-methyl-5-(diphosphooxymethyl)pyrimidine + 2 H(+) = thiamine phosphate + CO2 + diphosphate</text>
        <dbReference type="Rhea" id="RHEA:47844"/>
        <dbReference type="ChEBI" id="CHEBI:15378"/>
        <dbReference type="ChEBI" id="CHEBI:16526"/>
        <dbReference type="ChEBI" id="CHEBI:33019"/>
        <dbReference type="ChEBI" id="CHEBI:37575"/>
        <dbReference type="ChEBI" id="CHEBI:57841"/>
        <dbReference type="ChEBI" id="CHEBI:62899"/>
        <dbReference type="EC" id="2.5.1.3"/>
    </reaction>
</comment>
<comment type="catalytic activity">
    <reaction evidence="1">
        <text>2-(2-carboxy-4-methylthiazol-5-yl)ethyl phosphate + 4-amino-2-methyl-5-(diphosphooxymethyl)pyrimidine + 2 H(+) = thiamine phosphate + CO2 + diphosphate</text>
        <dbReference type="Rhea" id="RHEA:47848"/>
        <dbReference type="ChEBI" id="CHEBI:15378"/>
        <dbReference type="ChEBI" id="CHEBI:16526"/>
        <dbReference type="ChEBI" id="CHEBI:33019"/>
        <dbReference type="ChEBI" id="CHEBI:37575"/>
        <dbReference type="ChEBI" id="CHEBI:57841"/>
        <dbReference type="ChEBI" id="CHEBI:62890"/>
        <dbReference type="EC" id="2.5.1.3"/>
    </reaction>
</comment>
<comment type="catalytic activity">
    <reaction evidence="1">
        <text>4-methyl-5-(2-phosphooxyethyl)-thiazole + 4-amino-2-methyl-5-(diphosphooxymethyl)pyrimidine + H(+) = thiamine phosphate + diphosphate</text>
        <dbReference type="Rhea" id="RHEA:22328"/>
        <dbReference type="ChEBI" id="CHEBI:15378"/>
        <dbReference type="ChEBI" id="CHEBI:33019"/>
        <dbReference type="ChEBI" id="CHEBI:37575"/>
        <dbReference type="ChEBI" id="CHEBI:57841"/>
        <dbReference type="ChEBI" id="CHEBI:58296"/>
        <dbReference type="EC" id="2.5.1.3"/>
    </reaction>
</comment>
<comment type="cofactor">
    <cofactor evidence="1">
        <name>Mg(2+)</name>
        <dbReference type="ChEBI" id="CHEBI:18420"/>
    </cofactor>
    <text evidence="1">Binds 1 Mg(2+) ion per subunit.</text>
</comment>
<comment type="pathway">
    <text evidence="1">Cofactor biosynthesis; thiamine diphosphate biosynthesis; thiamine phosphate from 4-amino-2-methyl-5-diphosphomethylpyrimidine and 4-methyl-5-(2-phosphoethyl)-thiazole: step 1/1.</text>
</comment>
<comment type="similarity">
    <text evidence="1">Belongs to the thiamine-phosphate synthase family.</text>
</comment>
<feature type="chain" id="PRO_0000336434" description="Thiamine-phosphate synthase">
    <location>
        <begin position="1"/>
        <end position="223"/>
    </location>
</feature>
<feature type="region of interest" description="Disordered" evidence="2">
    <location>
        <begin position="197"/>
        <end position="223"/>
    </location>
</feature>
<feature type="compositionally biased region" description="Polar residues" evidence="2">
    <location>
        <begin position="206"/>
        <end position="217"/>
    </location>
</feature>
<feature type="binding site" evidence="1">
    <location>
        <begin position="37"/>
        <end position="41"/>
    </location>
    <ligand>
        <name>4-amino-2-methyl-5-(diphosphooxymethyl)pyrimidine</name>
        <dbReference type="ChEBI" id="CHEBI:57841"/>
    </ligand>
</feature>
<feature type="binding site" evidence="1">
    <location>
        <position position="69"/>
    </location>
    <ligand>
        <name>4-amino-2-methyl-5-(diphosphooxymethyl)pyrimidine</name>
        <dbReference type="ChEBI" id="CHEBI:57841"/>
    </ligand>
</feature>
<feature type="binding site" evidence="1">
    <location>
        <position position="70"/>
    </location>
    <ligand>
        <name>Mg(2+)</name>
        <dbReference type="ChEBI" id="CHEBI:18420"/>
    </ligand>
</feature>
<feature type="binding site" evidence="1">
    <location>
        <position position="89"/>
    </location>
    <ligand>
        <name>Mg(2+)</name>
        <dbReference type="ChEBI" id="CHEBI:18420"/>
    </ligand>
</feature>
<feature type="binding site" evidence="1">
    <location>
        <position position="108"/>
    </location>
    <ligand>
        <name>4-amino-2-methyl-5-(diphosphooxymethyl)pyrimidine</name>
        <dbReference type="ChEBI" id="CHEBI:57841"/>
    </ligand>
</feature>
<feature type="binding site" evidence="1">
    <location>
        <begin position="134"/>
        <end position="136"/>
    </location>
    <ligand>
        <name>2-[(2R,5Z)-2-carboxy-4-methylthiazol-5(2H)-ylidene]ethyl phosphate</name>
        <dbReference type="ChEBI" id="CHEBI:62899"/>
    </ligand>
</feature>
<feature type="binding site" evidence="1">
    <location>
        <position position="137"/>
    </location>
    <ligand>
        <name>4-amino-2-methyl-5-(diphosphooxymethyl)pyrimidine</name>
        <dbReference type="ChEBI" id="CHEBI:57841"/>
    </ligand>
</feature>
<feature type="binding site" evidence="1">
    <location>
        <position position="167"/>
    </location>
    <ligand>
        <name>2-[(2R,5Z)-2-carboxy-4-methylthiazol-5(2H)-ylidene]ethyl phosphate</name>
        <dbReference type="ChEBI" id="CHEBI:62899"/>
    </ligand>
</feature>
<feature type="binding site" evidence="1">
    <location>
        <begin position="187"/>
        <end position="188"/>
    </location>
    <ligand>
        <name>2-[(2R,5Z)-2-carboxy-4-methylthiazol-5(2H)-ylidene]ethyl phosphate</name>
        <dbReference type="ChEBI" id="CHEBI:62899"/>
    </ligand>
</feature>
<evidence type="ECO:0000255" key="1">
    <source>
        <dbReference type="HAMAP-Rule" id="MF_00097"/>
    </source>
</evidence>
<evidence type="ECO:0000256" key="2">
    <source>
        <dbReference type="SAM" id="MobiDB-lite"/>
    </source>
</evidence>
<proteinExistence type="inferred from homology"/>
<organism>
    <name type="scientific">Haloquadratum walsbyi (strain DSM 16790 / HBSQ001)</name>
    <dbReference type="NCBI Taxonomy" id="362976"/>
    <lineage>
        <taxon>Archaea</taxon>
        <taxon>Methanobacteriati</taxon>
        <taxon>Methanobacteriota</taxon>
        <taxon>Stenosarchaea group</taxon>
        <taxon>Halobacteria</taxon>
        <taxon>Halobacteriales</taxon>
        <taxon>Haloferacaceae</taxon>
        <taxon>Haloquadratum</taxon>
    </lineage>
</organism>
<sequence>MNTSMQTYLVTQEDRSAGRSTTEIVEAAIDGGIDIVQLREKETTARRRYEIGQTVRTQTAQAGVTFLVNDRVDLAAAVNADGVHLGDDDLPVTAAREVLGQDAIIGRSVSTPAAAQRAEDIGADYLGVGAVYPTGTKDVTAESAEIGPKTVTAITDAVSIPVIGIGGITPSNTTEVIRAGADGVAVVSAITTADDPAAATRKLQGSVDTASVESQLPSEEPSA</sequence>